<proteinExistence type="inferred from homology"/>
<sequence length="101" mass="10898">MYAIVKTGGKQYKVAEGDFVKVEKIEGEPGSSVALTPILLVDGADVTTKAADLAKVSVTAEIVEAVKGPKIKILKYKNKTGYKKRQGHRQQLTVLKITGIK</sequence>
<organism>
    <name type="scientific">Corynebacterium diphtheriae (strain ATCC 700971 / NCTC 13129 / Biotype gravis)</name>
    <dbReference type="NCBI Taxonomy" id="257309"/>
    <lineage>
        <taxon>Bacteria</taxon>
        <taxon>Bacillati</taxon>
        <taxon>Actinomycetota</taxon>
        <taxon>Actinomycetes</taxon>
        <taxon>Mycobacteriales</taxon>
        <taxon>Corynebacteriaceae</taxon>
        <taxon>Corynebacterium</taxon>
    </lineage>
</organism>
<keyword id="KW-1185">Reference proteome</keyword>
<keyword id="KW-0687">Ribonucleoprotein</keyword>
<keyword id="KW-0689">Ribosomal protein</keyword>
<keyword id="KW-0694">RNA-binding</keyword>
<keyword id="KW-0699">rRNA-binding</keyword>
<dbReference type="EMBL" id="BX248359">
    <property type="protein sequence ID" value="CAE50311.1"/>
    <property type="molecule type" value="Genomic_DNA"/>
</dbReference>
<dbReference type="RefSeq" id="WP_003852455.1">
    <property type="nucleotide sequence ID" value="NC_002935.2"/>
</dbReference>
<dbReference type="SMR" id="Q6NFV5"/>
<dbReference type="STRING" id="257309.DIP1781"/>
<dbReference type="GeneID" id="97332651"/>
<dbReference type="KEGG" id="cdi:DIP1781"/>
<dbReference type="HOGENOM" id="CLU_061463_3_0_11"/>
<dbReference type="Proteomes" id="UP000002198">
    <property type="component" value="Chromosome"/>
</dbReference>
<dbReference type="GO" id="GO:0005737">
    <property type="term" value="C:cytoplasm"/>
    <property type="evidence" value="ECO:0007669"/>
    <property type="project" value="UniProtKB-ARBA"/>
</dbReference>
<dbReference type="GO" id="GO:1990904">
    <property type="term" value="C:ribonucleoprotein complex"/>
    <property type="evidence" value="ECO:0007669"/>
    <property type="project" value="UniProtKB-KW"/>
</dbReference>
<dbReference type="GO" id="GO:0005840">
    <property type="term" value="C:ribosome"/>
    <property type="evidence" value="ECO:0007669"/>
    <property type="project" value="UniProtKB-KW"/>
</dbReference>
<dbReference type="GO" id="GO:0019843">
    <property type="term" value="F:rRNA binding"/>
    <property type="evidence" value="ECO:0007669"/>
    <property type="project" value="UniProtKB-UniRule"/>
</dbReference>
<dbReference type="GO" id="GO:0003735">
    <property type="term" value="F:structural constituent of ribosome"/>
    <property type="evidence" value="ECO:0007669"/>
    <property type="project" value="InterPro"/>
</dbReference>
<dbReference type="GO" id="GO:0006412">
    <property type="term" value="P:translation"/>
    <property type="evidence" value="ECO:0007669"/>
    <property type="project" value="UniProtKB-UniRule"/>
</dbReference>
<dbReference type="HAMAP" id="MF_01363">
    <property type="entry name" value="Ribosomal_bL21"/>
    <property type="match status" value="1"/>
</dbReference>
<dbReference type="InterPro" id="IPR028909">
    <property type="entry name" value="bL21-like"/>
</dbReference>
<dbReference type="InterPro" id="IPR036164">
    <property type="entry name" value="bL21-like_sf"/>
</dbReference>
<dbReference type="InterPro" id="IPR001787">
    <property type="entry name" value="Ribosomal_bL21"/>
</dbReference>
<dbReference type="InterPro" id="IPR018258">
    <property type="entry name" value="Ribosomal_bL21_CS"/>
</dbReference>
<dbReference type="NCBIfam" id="TIGR00061">
    <property type="entry name" value="L21"/>
    <property type="match status" value="1"/>
</dbReference>
<dbReference type="PANTHER" id="PTHR21349">
    <property type="entry name" value="50S RIBOSOMAL PROTEIN L21"/>
    <property type="match status" value="1"/>
</dbReference>
<dbReference type="PANTHER" id="PTHR21349:SF0">
    <property type="entry name" value="LARGE RIBOSOMAL SUBUNIT PROTEIN BL21M"/>
    <property type="match status" value="1"/>
</dbReference>
<dbReference type="Pfam" id="PF00829">
    <property type="entry name" value="Ribosomal_L21p"/>
    <property type="match status" value="1"/>
</dbReference>
<dbReference type="SUPFAM" id="SSF141091">
    <property type="entry name" value="L21p-like"/>
    <property type="match status" value="1"/>
</dbReference>
<dbReference type="PROSITE" id="PS01169">
    <property type="entry name" value="RIBOSOMAL_L21"/>
    <property type="match status" value="1"/>
</dbReference>
<gene>
    <name evidence="1" type="primary">rplU</name>
    <name type="ordered locus">DIP1781</name>
</gene>
<accession>Q6NFV5</accession>
<comment type="function">
    <text evidence="1">This protein binds to 23S rRNA in the presence of protein L20.</text>
</comment>
<comment type="subunit">
    <text evidence="1">Part of the 50S ribosomal subunit. Contacts protein L20.</text>
</comment>
<comment type="similarity">
    <text evidence="1">Belongs to the bacterial ribosomal protein bL21 family.</text>
</comment>
<evidence type="ECO:0000255" key="1">
    <source>
        <dbReference type="HAMAP-Rule" id="MF_01363"/>
    </source>
</evidence>
<evidence type="ECO:0000305" key="2"/>
<name>RL21_CORDI</name>
<feature type="chain" id="PRO_0000270655" description="Large ribosomal subunit protein bL21">
    <location>
        <begin position="1"/>
        <end position="101"/>
    </location>
</feature>
<protein>
    <recommendedName>
        <fullName evidence="1">Large ribosomal subunit protein bL21</fullName>
    </recommendedName>
    <alternativeName>
        <fullName evidence="2">50S ribosomal protein L21</fullName>
    </alternativeName>
</protein>
<reference key="1">
    <citation type="journal article" date="2003" name="Nucleic Acids Res.">
        <title>The complete genome sequence and analysis of Corynebacterium diphtheriae NCTC13129.</title>
        <authorList>
            <person name="Cerdeno-Tarraga A.-M."/>
            <person name="Efstratiou A."/>
            <person name="Dover L.G."/>
            <person name="Holden M.T.G."/>
            <person name="Pallen M.J."/>
            <person name="Bentley S.D."/>
            <person name="Besra G.S."/>
            <person name="Churcher C.M."/>
            <person name="James K.D."/>
            <person name="De Zoysa A."/>
            <person name="Chillingworth T."/>
            <person name="Cronin A."/>
            <person name="Dowd L."/>
            <person name="Feltwell T."/>
            <person name="Hamlin N."/>
            <person name="Holroyd S."/>
            <person name="Jagels K."/>
            <person name="Moule S."/>
            <person name="Quail M.A."/>
            <person name="Rabbinowitsch E."/>
            <person name="Rutherford K.M."/>
            <person name="Thomson N.R."/>
            <person name="Unwin L."/>
            <person name="Whitehead S."/>
            <person name="Barrell B.G."/>
            <person name="Parkhill J."/>
        </authorList>
    </citation>
    <scope>NUCLEOTIDE SEQUENCE [LARGE SCALE GENOMIC DNA]</scope>
    <source>
        <strain>ATCC 700971 / NCTC 13129 / Biotype gravis</strain>
    </source>
</reference>